<dbReference type="EC" id="4.2.1.59" evidence="1"/>
<dbReference type="EMBL" id="AE016828">
    <property type="protein sequence ID" value="AAO90158.1"/>
    <property type="molecule type" value="Genomic_DNA"/>
</dbReference>
<dbReference type="RefSeq" id="NP_819644.1">
    <property type="nucleotide sequence ID" value="NC_002971.4"/>
</dbReference>
<dbReference type="RefSeq" id="WP_010957689.1">
    <property type="nucleotide sequence ID" value="NZ_CDBG01000001.1"/>
</dbReference>
<dbReference type="SMR" id="Q820W7"/>
<dbReference type="STRING" id="227377.CBU_0614"/>
<dbReference type="DNASU" id="1208499"/>
<dbReference type="EnsemblBacteria" id="AAO90158">
    <property type="protein sequence ID" value="AAO90158"/>
    <property type="gene ID" value="CBU_0614"/>
</dbReference>
<dbReference type="GeneID" id="1208499"/>
<dbReference type="KEGG" id="cbu:CBU_0614"/>
<dbReference type="PATRIC" id="fig|227377.7.peg.602"/>
<dbReference type="eggNOG" id="COG0764">
    <property type="taxonomic scope" value="Bacteria"/>
</dbReference>
<dbReference type="HOGENOM" id="CLU_078912_1_0_6"/>
<dbReference type="OrthoDB" id="9772788at2"/>
<dbReference type="Proteomes" id="UP000002671">
    <property type="component" value="Chromosome"/>
</dbReference>
<dbReference type="GO" id="GO:0005737">
    <property type="term" value="C:cytoplasm"/>
    <property type="evidence" value="ECO:0007669"/>
    <property type="project" value="UniProtKB-SubCell"/>
</dbReference>
<dbReference type="GO" id="GO:0016020">
    <property type="term" value="C:membrane"/>
    <property type="evidence" value="ECO:0007669"/>
    <property type="project" value="GOC"/>
</dbReference>
<dbReference type="GO" id="GO:0019171">
    <property type="term" value="F:(3R)-hydroxyacyl-[acyl-carrier-protein] dehydratase activity"/>
    <property type="evidence" value="ECO:0007669"/>
    <property type="project" value="UniProtKB-EC"/>
</dbReference>
<dbReference type="GO" id="GO:0006633">
    <property type="term" value="P:fatty acid biosynthetic process"/>
    <property type="evidence" value="ECO:0007669"/>
    <property type="project" value="UniProtKB-UniRule"/>
</dbReference>
<dbReference type="GO" id="GO:0009245">
    <property type="term" value="P:lipid A biosynthetic process"/>
    <property type="evidence" value="ECO:0007669"/>
    <property type="project" value="UniProtKB-UniRule"/>
</dbReference>
<dbReference type="CDD" id="cd01288">
    <property type="entry name" value="FabZ"/>
    <property type="match status" value="1"/>
</dbReference>
<dbReference type="FunFam" id="3.10.129.10:FF:000001">
    <property type="entry name" value="3-hydroxyacyl-[acyl-carrier-protein] dehydratase FabZ"/>
    <property type="match status" value="1"/>
</dbReference>
<dbReference type="Gene3D" id="3.10.129.10">
    <property type="entry name" value="Hotdog Thioesterase"/>
    <property type="match status" value="1"/>
</dbReference>
<dbReference type="HAMAP" id="MF_00406">
    <property type="entry name" value="FabZ"/>
    <property type="match status" value="1"/>
</dbReference>
<dbReference type="InterPro" id="IPR013114">
    <property type="entry name" value="FabA_FabZ"/>
</dbReference>
<dbReference type="InterPro" id="IPR010084">
    <property type="entry name" value="FabZ"/>
</dbReference>
<dbReference type="InterPro" id="IPR029069">
    <property type="entry name" value="HotDog_dom_sf"/>
</dbReference>
<dbReference type="NCBIfam" id="TIGR01750">
    <property type="entry name" value="fabZ"/>
    <property type="match status" value="1"/>
</dbReference>
<dbReference type="NCBIfam" id="NF000582">
    <property type="entry name" value="PRK00006.1"/>
    <property type="match status" value="1"/>
</dbReference>
<dbReference type="PANTHER" id="PTHR30272">
    <property type="entry name" value="3-HYDROXYACYL-[ACYL-CARRIER-PROTEIN] DEHYDRATASE"/>
    <property type="match status" value="1"/>
</dbReference>
<dbReference type="PANTHER" id="PTHR30272:SF1">
    <property type="entry name" value="3-HYDROXYACYL-[ACYL-CARRIER-PROTEIN] DEHYDRATASE"/>
    <property type="match status" value="1"/>
</dbReference>
<dbReference type="Pfam" id="PF07977">
    <property type="entry name" value="FabA"/>
    <property type="match status" value="1"/>
</dbReference>
<dbReference type="SUPFAM" id="SSF54637">
    <property type="entry name" value="Thioesterase/thiol ester dehydrase-isomerase"/>
    <property type="match status" value="1"/>
</dbReference>
<comment type="function">
    <text evidence="1">Involved in unsaturated fatty acids biosynthesis. Catalyzes the dehydration of short chain beta-hydroxyacyl-ACPs and long chain saturated and unsaturated beta-hydroxyacyl-ACPs.</text>
</comment>
<comment type="catalytic activity">
    <reaction evidence="1">
        <text>a (3R)-hydroxyacyl-[ACP] = a (2E)-enoyl-[ACP] + H2O</text>
        <dbReference type="Rhea" id="RHEA:13097"/>
        <dbReference type="Rhea" id="RHEA-COMP:9925"/>
        <dbReference type="Rhea" id="RHEA-COMP:9945"/>
        <dbReference type="ChEBI" id="CHEBI:15377"/>
        <dbReference type="ChEBI" id="CHEBI:78784"/>
        <dbReference type="ChEBI" id="CHEBI:78827"/>
        <dbReference type="EC" id="4.2.1.59"/>
    </reaction>
</comment>
<comment type="subcellular location">
    <subcellularLocation>
        <location evidence="1">Cytoplasm</location>
    </subcellularLocation>
</comment>
<comment type="similarity">
    <text evidence="1">Belongs to the thioester dehydratase family. FabZ subfamily.</text>
</comment>
<accession>Q820W7</accession>
<organism>
    <name type="scientific">Coxiella burnetii (strain RSA 493 / Nine Mile phase I)</name>
    <dbReference type="NCBI Taxonomy" id="227377"/>
    <lineage>
        <taxon>Bacteria</taxon>
        <taxon>Pseudomonadati</taxon>
        <taxon>Pseudomonadota</taxon>
        <taxon>Gammaproteobacteria</taxon>
        <taxon>Legionellales</taxon>
        <taxon>Coxiellaceae</taxon>
        <taxon>Coxiella</taxon>
    </lineage>
</organism>
<reference key="1">
    <citation type="journal article" date="2003" name="Proc. Natl. Acad. Sci. U.S.A.">
        <title>Complete genome sequence of the Q-fever pathogen, Coxiella burnetii.</title>
        <authorList>
            <person name="Seshadri R."/>
            <person name="Paulsen I.T."/>
            <person name="Eisen J.A."/>
            <person name="Read T.D."/>
            <person name="Nelson K.E."/>
            <person name="Nelson W.C."/>
            <person name="Ward N.L."/>
            <person name="Tettelin H."/>
            <person name="Davidsen T.M."/>
            <person name="Beanan M.J."/>
            <person name="DeBoy R.T."/>
            <person name="Daugherty S.C."/>
            <person name="Brinkac L.M."/>
            <person name="Madupu R."/>
            <person name="Dodson R.J."/>
            <person name="Khouri H.M."/>
            <person name="Lee K.H."/>
            <person name="Carty H.A."/>
            <person name="Scanlan D."/>
            <person name="Heinzen R.A."/>
            <person name="Thompson H.A."/>
            <person name="Samuel J.E."/>
            <person name="Fraser C.M."/>
            <person name="Heidelberg J.F."/>
        </authorList>
    </citation>
    <scope>NUCLEOTIDE SEQUENCE [LARGE SCALE GENOMIC DNA]</scope>
    <source>
        <strain>RSA 493 / Nine Mile phase I</strain>
    </source>
</reference>
<name>FABZ_COXBU</name>
<feature type="chain" id="PRO_0000091669" description="3-hydroxyacyl-[acyl-carrier-protein] dehydratase FabZ">
    <location>
        <begin position="1"/>
        <end position="145"/>
    </location>
</feature>
<feature type="active site" evidence="1">
    <location>
        <position position="50"/>
    </location>
</feature>
<proteinExistence type="inferred from homology"/>
<sequence length="145" mass="16369">MNVMNITDIKKYIPHRYPFLLIDRVIKIEKDKSLVAIKNVTVNEPFFTGHFPVRPVMPGVLIIESLAQAAGILIVKSLNLPEGHKDIYFFAGVDNARFKRVVEPGDQLTLEVKVLKVHRGLWKFEGKATVDDQLACKAELMTIKG</sequence>
<gene>
    <name evidence="1" type="primary">fabZ</name>
    <name type="ordered locus">CBU_0614</name>
</gene>
<protein>
    <recommendedName>
        <fullName evidence="1">3-hydroxyacyl-[acyl-carrier-protein] dehydratase FabZ</fullName>
        <ecNumber evidence="1">4.2.1.59</ecNumber>
    </recommendedName>
    <alternativeName>
        <fullName evidence="1">(3R)-hydroxymyristoyl-[acyl-carrier-protein] dehydratase</fullName>
        <shortName evidence="1">(3R)-hydroxymyristoyl-ACP dehydrase</shortName>
    </alternativeName>
    <alternativeName>
        <fullName evidence="1">Beta-hydroxyacyl-ACP dehydratase</fullName>
    </alternativeName>
</protein>
<evidence type="ECO:0000255" key="1">
    <source>
        <dbReference type="HAMAP-Rule" id="MF_00406"/>
    </source>
</evidence>
<keyword id="KW-0963">Cytoplasm</keyword>
<keyword id="KW-0441">Lipid A biosynthesis</keyword>
<keyword id="KW-0444">Lipid biosynthesis</keyword>
<keyword id="KW-0443">Lipid metabolism</keyword>
<keyword id="KW-0456">Lyase</keyword>
<keyword id="KW-1185">Reference proteome</keyword>